<protein>
    <recommendedName>
        <fullName evidence="1">Cell division protein SepF</fullName>
    </recommendedName>
</protein>
<organism>
    <name type="scientific">Bacillus cereus (strain ATCC 14579 / DSM 31 / CCUG 7414 / JCM 2152 / NBRC 15305 / NCIMB 9373 / NCTC 2599 / NRRL B-3711)</name>
    <dbReference type="NCBI Taxonomy" id="226900"/>
    <lineage>
        <taxon>Bacteria</taxon>
        <taxon>Bacillati</taxon>
        <taxon>Bacillota</taxon>
        <taxon>Bacilli</taxon>
        <taxon>Bacillales</taxon>
        <taxon>Bacillaceae</taxon>
        <taxon>Bacillus</taxon>
        <taxon>Bacillus cereus group</taxon>
    </lineage>
</organism>
<name>SEPF_BACCR</name>
<comment type="function">
    <text evidence="1">Cell division protein that is part of the divisome complex and is recruited early to the Z-ring. Probably stimulates Z-ring formation, perhaps through the cross-linking of FtsZ protofilaments. Its function overlaps with FtsA.</text>
</comment>
<comment type="subunit">
    <text evidence="1">Homodimer. Interacts with FtsZ.</text>
</comment>
<comment type="subcellular location">
    <subcellularLocation>
        <location evidence="1">Cytoplasm</location>
    </subcellularLocation>
    <text evidence="1">Localizes to the division site, in a FtsZ-dependent manner.</text>
</comment>
<comment type="similarity">
    <text evidence="1">Belongs to the SepF family.</text>
</comment>
<accession>Q812W8</accession>
<sequence>MSWSKVKYFFFDTPEEKEAAQYGYEKEQTDMKKQQDPPEQQDVTFPKAQPKQNVVSIETAKQSSKVVLLEPRTYSEAQGIADHLKGRRAVVINLQRMSTDQAVRIVDFLSGTVYAIGGDIQKIGPKTFMCTPENVDIVGAISELFGEEEETNIKRW</sequence>
<keyword id="KW-0131">Cell cycle</keyword>
<keyword id="KW-0132">Cell division</keyword>
<keyword id="KW-0963">Cytoplasm</keyword>
<keyword id="KW-1185">Reference proteome</keyword>
<keyword id="KW-0717">Septation</keyword>
<reference key="1">
    <citation type="journal article" date="2003" name="Nature">
        <title>Genome sequence of Bacillus cereus and comparative analysis with Bacillus anthracis.</title>
        <authorList>
            <person name="Ivanova N."/>
            <person name="Sorokin A."/>
            <person name="Anderson I."/>
            <person name="Galleron N."/>
            <person name="Candelon B."/>
            <person name="Kapatral V."/>
            <person name="Bhattacharyya A."/>
            <person name="Reznik G."/>
            <person name="Mikhailova N."/>
            <person name="Lapidus A."/>
            <person name="Chu L."/>
            <person name="Mazur M."/>
            <person name="Goltsman E."/>
            <person name="Larsen N."/>
            <person name="D'Souza M."/>
            <person name="Walunas T."/>
            <person name="Grechkin Y."/>
            <person name="Pusch G."/>
            <person name="Haselkorn R."/>
            <person name="Fonstein M."/>
            <person name="Ehrlich S.D."/>
            <person name="Overbeek R."/>
            <person name="Kyrpides N.C."/>
        </authorList>
    </citation>
    <scope>NUCLEOTIDE SEQUENCE [LARGE SCALE GENOMIC DNA]</scope>
    <source>
        <strain>ATCC 14579 / DSM 31 / CCUG 7414 / JCM 2152 / NBRC 15305 / NCIMB 9373 / NCTC 2599 / NRRL B-3711</strain>
    </source>
</reference>
<feature type="chain" id="PRO_0000333977" description="Cell division protein SepF">
    <location>
        <begin position="1"/>
        <end position="156"/>
    </location>
</feature>
<feature type="region of interest" description="Disordered" evidence="2">
    <location>
        <begin position="20"/>
        <end position="50"/>
    </location>
</feature>
<feature type="compositionally biased region" description="Basic and acidic residues" evidence="2">
    <location>
        <begin position="20"/>
        <end position="36"/>
    </location>
</feature>
<dbReference type="EMBL" id="AE016877">
    <property type="protein sequence ID" value="AAP10820.1"/>
    <property type="molecule type" value="Genomic_DNA"/>
</dbReference>
<dbReference type="RefSeq" id="NP_833619.1">
    <property type="nucleotide sequence ID" value="NC_004722.1"/>
</dbReference>
<dbReference type="RefSeq" id="WP_000119129.1">
    <property type="nucleotide sequence ID" value="NZ_CP138336.1"/>
</dbReference>
<dbReference type="SMR" id="Q812W8"/>
<dbReference type="STRING" id="226900.BC_3899"/>
<dbReference type="KEGG" id="bce:BC3899"/>
<dbReference type="PATRIC" id="fig|226900.8.peg.4021"/>
<dbReference type="HOGENOM" id="CLU_078499_4_1_9"/>
<dbReference type="OrthoDB" id="9815206at2"/>
<dbReference type="Proteomes" id="UP000001417">
    <property type="component" value="Chromosome"/>
</dbReference>
<dbReference type="GO" id="GO:0005737">
    <property type="term" value="C:cytoplasm"/>
    <property type="evidence" value="ECO:0007669"/>
    <property type="project" value="UniProtKB-SubCell"/>
</dbReference>
<dbReference type="GO" id="GO:0000917">
    <property type="term" value="P:division septum assembly"/>
    <property type="evidence" value="ECO:0007669"/>
    <property type="project" value="UniProtKB-KW"/>
</dbReference>
<dbReference type="GO" id="GO:0043093">
    <property type="term" value="P:FtsZ-dependent cytokinesis"/>
    <property type="evidence" value="ECO:0007669"/>
    <property type="project" value="UniProtKB-UniRule"/>
</dbReference>
<dbReference type="Gene3D" id="3.30.110.150">
    <property type="entry name" value="SepF-like protein"/>
    <property type="match status" value="1"/>
</dbReference>
<dbReference type="HAMAP" id="MF_01197">
    <property type="entry name" value="SepF"/>
    <property type="match status" value="1"/>
</dbReference>
<dbReference type="InterPro" id="IPR023052">
    <property type="entry name" value="Cell_div_SepF"/>
</dbReference>
<dbReference type="InterPro" id="IPR007561">
    <property type="entry name" value="Cell_div_SepF/SepF-rel"/>
</dbReference>
<dbReference type="InterPro" id="IPR038594">
    <property type="entry name" value="SepF-like_sf"/>
</dbReference>
<dbReference type="PANTHER" id="PTHR35798">
    <property type="entry name" value="CELL DIVISION PROTEIN SEPF"/>
    <property type="match status" value="1"/>
</dbReference>
<dbReference type="PANTHER" id="PTHR35798:SF1">
    <property type="entry name" value="CELL DIVISION PROTEIN SEPF"/>
    <property type="match status" value="1"/>
</dbReference>
<dbReference type="Pfam" id="PF04472">
    <property type="entry name" value="SepF"/>
    <property type="match status" value="1"/>
</dbReference>
<gene>
    <name evidence="1" type="primary">sepF</name>
    <name type="ordered locus">BC_3899</name>
</gene>
<evidence type="ECO:0000255" key="1">
    <source>
        <dbReference type="HAMAP-Rule" id="MF_01197"/>
    </source>
</evidence>
<evidence type="ECO:0000256" key="2">
    <source>
        <dbReference type="SAM" id="MobiDB-lite"/>
    </source>
</evidence>
<proteinExistence type="inferred from homology"/>